<sequence length="1036" mass="116132">MEAQVENAIQIAFDPTSSQQLRGQAVEFLERLRSEGSAWQASLALFTRDPRPSDIIRHTSLDLVNNAVQEHRLDEQSLAYIKDTLMSHVRQSYAPGSSTADTSHIQNKLMQTMTYLFAALYPTSWRSFFDDFRALAGDQATIGNVNTATTFLYLRMLVQVHDEIADQLVARSKEETDRNTHLKDLIRDNDIQKIALSWQEILAKWRETDLSLVEMCLRTIGRYVSWIRLELVINQDMITTFLEMAGQQGISDPESPAGKVRDAAIDTFSEIVGKKMEPSNKIELILFLNLPDVVGQLITSPALAEFNSPNYDNDLAETVAKLVNNIVFDVVKILENDNVDEQTRQRADDLIRIFTPYLLRFFADQYDEVCSTVIPSLTDLLTFLRKLQKKQGTVPPQYAAVLPPVLDAIIAKMKYDETADWGEEGEQTDEAEFQDLRRRLHVLQQTITTIDESYYIETLSRLVNGTFSGLSQGDQSLNWRDLELALYEMYLFGELAIRNQGLFAKREPSSVAAQHLVGMMNSMIDSGLANYPHPAVQLQYMEICVRYYQFFEQNPHLIPKVLENFVQLTHSSHVKVRSRSWYLFQRLVKHLRAQLGNVSYDIIQAVADLLTIKAELPDTSEDEMSSDEEDQSADALFNSQLYLFEAVGCIASSNTVSAENKKLYAQTIMSPLFVDLEQTLPQARNGDDRATLQIHHIIMALGTLARGYSDWVPSNNSSAVPHSDVADEFVKASEAILVALESLNSSSSIRHAARFAFSRMIAVLGSRLLQQLPSWIEGLLSLSSSMDEISTFLKVLGQVVFTFKSEISNILDTVMTPVLQRIFSALATTPSGTDDEIQLAELRREYLNFLIVVLNQGLGSVLVSNTNQSSFETIISSIENFARDTHDAPTARLAIFVLIRMINVWCGPDKVGPGANQTPTSPATTQAPLPGFENYVVERFSPLAWSIPASPGFNSKDAQAKQVLVEAANLQTEIVKKVGEPYVERLKSDLSGNGVAADGVDQYVRTLAGALEGTKKEKEWRNFFVQFVDRMLSGRG</sequence>
<feature type="chain" id="PRO_0000343101" description="Exportin-T">
    <location>
        <begin position="1"/>
        <end position="1036"/>
    </location>
</feature>
<protein>
    <recommendedName>
        <fullName>Exportin-T</fullName>
    </recommendedName>
    <alternativeName>
        <fullName>Exportin(tRNA)</fullName>
    </alternativeName>
    <alternativeName>
        <fullName>Karyopherin-beta</fullName>
    </alternativeName>
    <alternativeName>
        <fullName>tRNA exportin</fullName>
    </alternativeName>
</protein>
<evidence type="ECO:0000250" key="1"/>
<evidence type="ECO:0000305" key="2"/>
<keyword id="KW-0963">Cytoplasm</keyword>
<keyword id="KW-0539">Nucleus</keyword>
<keyword id="KW-0694">RNA-binding</keyword>
<keyword id="KW-0813">Transport</keyword>
<keyword id="KW-0819">tRNA processing</keyword>
<keyword id="KW-0820">tRNA-binding</keyword>
<gene>
    <name type="primary">LOS1</name>
    <name type="ORF">SNOG_00254</name>
</gene>
<comment type="function">
    <text evidence="1">tRNA nucleus export receptor which facilitates tRNA translocation across the nuclear pore complex. Involved in pre-tRNA splicing, probably by affecting the interaction of pre-tRNA with splicing endonuclease (By similarity).</text>
</comment>
<comment type="subcellular location">
    <subcellularLocation>
        <location evidence="1">Nucleus</location>
    </subcellularLocation>
    <subcellularLocation>
        <location evidence="1">Cytoplasm</location>
    </subcellularLocation>
    <text evidence="1">Shuttles between the nucleus and the cytoplasm.</text>
</comment>
<comment type="similarity">
    <text evidence="2">Belongs to the exportin family.</text>
</comment>
<proteinExistence type="inferred from homology"/>
<organism>
    <name type="scientific">Phaeosphaeria nodorum (strain SN15 / ATCC MYA-4574 / FGSC 10173)</name>
    <name type="common">Glume blotch fungus</name>
    <name type="synonym">Parastagonospora nodorum</name>
    <dbReference type="NCBI Taxonomy" id="321614"/>
    <lineage>
        <taxon>Eukaryota</taxon>
        <taxon>Fungi</taxon>
        <taxon>Dikarya</taxon>
        <taxon>Ascomycota</taxon>
        <taxon>Pezizomycotina</taxon>
        <taxon>Dothideomycetes</taxon>
        <taxon>Pleosporomycetidae</taxon>
        <taxon>Pleosporales</taxon>
        <taxon>Pleosporineae</taxon>
        <taxon>Phaeosphaeriaceae</taxon>
        <taxon>Parastagonospora</taxon>
    </lineage>
</organism>
<name>XPOT_PHANO</name>
<reference key="1">
    <citation type="journal article" date="2007" name="Plant Cell">
        <title>Dothideomycete-plant interactions illuminated by genome sequencing and EST analysis of the wheat pathogen Stagonospora nodorum.</title>
        <authorList>
            <person name="Hane J.K."/>
            <person name="Lowe R.G.T."/>
            <person name="Solomon P.S."/>
            <person name="Tan K.-C."/>
            <person name="Schoch C.L."/>
            <person name="Spatafora J.W."/>
            <person name="Crous P.W."/>
            <person name="Kodira C.D."/>
            <person name="Birren B.W."/>
            <person name="Galagan J.E."/>
            <person name="Torriani S.F.F."/>
            <person name="McDonald B.A."/>
            <person name="Oliver R.P."/>
        </authorList>
    </citation>
    <scope>NUCLEOTIDE SEQUENCE [LARGE SCALE GENOMIC DNA]</scope>
    <source>
        <strain>SN15 / ATCC MYA-4574 / FGSC 10173</strain>
    </source>
</reference>
<dbReference type="EMBL" id="CH445325">
    <property type="protein sequence ID" value="EAT91749.1"/>
    <property type="molecule type" value="Genomic_DNA"/>
</dbReference>
<dbReference type="RefSeq" id="XP_001790945.1">
    <property type="nucleotide sequence ID" value="XM_001790893.1"/>
</dbReference>
<dbReference type="SMR" id="Q0V6W0"/>
<dbReference type="FunCoup" id="Q0V6W0">
    <property type="interactions" value="979"/>
</dbReference>
<dbReference type="STRING" id="321614.Q0V6W0"/>
<dbReference type="EnsemblFungi" id="SNOT_00254">
    <property type="protein sequence ID" value="SNOT_00254"/>
    <property type="gene ID" value="SNOG_00254"/>
</dbReference>
<dbReference type="GeneID" id="5967693"/>
<dbReference type="KEGG" id="pno:SNOG_00254"/>
<dbReference type="VEuPathDB" id="FungiDB:JI435_002540"/>
<dbReference type="eggNOG" id="KOG2021">
    <property type="taxonomic scope" value="Eukaryota"/>
</dbReference>
<dbReference type="HOGENOM" id="CLU_004414_0_1_1"/>
<dbReference type="InParanoid" id="Q0V6W0"/>
<dbReference type="OMA" id="HEMFLFG"/>
<dbReference type="OrthoDB" id="26399at2759"/>
<dbReference type="Proteomes" id="UP000001055">
    <property type="component" value="Unassembled WGS sequence"/>
</dbReference>
<dbReference type="GO" id="GO:0005737">
    <property type="term" value="C:cytoplasm"/>
    <property type="evidence" value="ECO:0000318"/>
    <property type="project" value="GO_Central"/>
</dbReference>
<dbReference type="GO" id="GO:0016363">
    <property type="term" value="C:nuclear matrix"/>
    <property type="evidence" value="ECO:0000318"/>
    <property type="project" value="GO_Central"/>
</dbReference>
<dbReference type="GO" id="GO:0005643">
    <property type="term" value="C:nuclear pore"/>
    <property type="evidence" value="ECO:0000318"/>
    <property type="project" value="GO_Central"/>
</dbReference>
<dbReference type="GO" id="GO:0031267">
    <property type="term" value="F:small GTPase binding"/>
    <property type="evidence" value="ECO:0007669"/>
    <property type="project" value="InterPro"/>
</dbReference>
<dbReference type="GO" id="GO:0000049">
    <property type="term" value="F:tRNA binding"/>
    <property type="evidence" value="ECO:0000318"/>
    <property type="project" value="GO_Central"/>
</dbReference>
<dbReference type="GO" id="GO:0008033">
    <property type="term" value="P:tRNA processing"/>
    <property type="evidence" value="ECO:0007669"/>
    <property type="project" value="UniProtKB-KW"/>
</dbReference>
<dbReference type="GO" id="GO:0071528">
    <property type="term" value="P:tRNA re-export from nucleus"/>
    <property type="evidence" value="ECO:0000318"/>
    <property type="project" value="GO_Central"/>
</dbReference>
<dbReference type="FunFam" id="1.25.10.10:FF:000355">
    <property type="entry name" value="Exportin-T"/>
    <property type="match status" value="1"/>
</dbReference>
<dbReference type="Gene3D" id="1.25.10.10">
    <property type="entry name" value="Leucine-rich Repeat Variant"/>
    <property type="match status" value="1"/>
</dbReference>
<dbReference type="InterPro" id="IPR011989">
    <property type="entry name" value="ARM-like"/>
</dbReference>
<dbReference type="InterPro" id="IPR016024">
    <property type="entry name" value="ARM-type_fold"/>
</dbReference>
<dbReference type="InterPro" id="IPR013598">
    <property type="entry name" value="Exportin-1/Importin-b-like"/>
</dbReference>
<dbReference type="InterPro" id="IPR045546">
    <property type="entry name" value="Exportin-T_C"/>
</dbReference>
<dbReference type="InterPro" id="IPR040017">
    <property type="entry name" value="XPOT"/>
</dbReference>
<dbReference type="PANTHER" id="PTHR15952:SF11">
    <property type="entry name" value="EXPORTIN-T"/>
    <property type="match status" value="1"/>
</dbReference>
<dbReference type="PANTHER" id="PTHR15952">
    <property type="entry name" value="EXPORTIN-T/LOS1"/>
    <property type="match status" value="1"/>
</dbReference>
<dbReference type="Pfam" id="PF19282">
    <property type="entry name" value="Exportin-T"/>
    <property type="match status" value="1"/>
</dbReference>
<dbReference type="Pfam" id="PF08389">
    <property type="entry name" value="Xpo1"/>
    <property type="match status" value="1"/>
</dbReference>
<dbReference type="SUPFAM" id="SSF48371">
    <property type="entry name" value="ARM repeat"/>
    <property type="match status" value="1"/>
</dbReference>
<accession>Q0V6W0</accession>